<feature type="signal peptide" evidence="4">
    <location>
        <begin position="1"/>
        <end position="15"/>
    </location>
</feature>
<feature type="chain" id="PRO_5000006628" description="Odontogenic ameloblast-associated protein">
    <location>
        <begin position="16"/>
        <end position="276"/>
    </location>
</feature>
<feature type="region of interest" description="Interaction with ARHGEF5" evidence="2">
    <location>
        <begin position="125"/>
        <end position="127"/>
    </location>
</feature>
<feature type="glycosylation site" description="O-linked (GalNAc...) threonine" evidence="4">
    <location>
        <position position="101"/>
    </location>
</feature>
<feature type="glycosylation site" description="O-linked (GalNAc...) threonine" evidence="4">
    <location>
        <position position="113"/>
    </location>
</feature>
<feature type="glycosylation site" description="O-linked (GalNAc...) threonine" evidence="4">
    <location>
        <position position="117"/>
    </location>
</feature>
<feature type="glycosylation site" description="O-linked (GalNAc...) serine" evidence="4">
    <location>
        <position position="246"/>
    </location>
</feature>
<feature type="glycosylation site" description="O-linked (GalNAc...) threonine" evidence="4">
    <location>
        <position position="247"/>
    </location>
</feature>
<feature type="glycosylation site" description="O-linked (GalNAc...) threonine" evidence="4">
    <location>
        <position position="248"/>
    </location>
</feature>
<feature type="glycosylation site" description="O-linked (GalNAc...) threonine" evidence="4">
    <location>
        <position position="252"/>
    </location>
</feature>
<feature type="glycosylation site" description="O-linked (GalNAc...) serine" evidence="4">
    <location>
        <position position="253"/>
    </location>
</feature>
<feature type="glycosylation site" description="O-linked (GalNAc...) threonine" evidence="4">
    <location>
        <position position="254"/>
    </location>
</feature>
<feature type="glycosylation site" description="O-linked (GalNAc...) threonine" evidence="4">
    <location>
        <position position="258"/>
    </location>
</feature>
<feature type="glycosylation site" description="O-linked (GalNAc...) threonine" evidence="4">
    <location>
        <position position="260"/>
    </location>
</feature>
<feature type="glycosylation site" description="O-linked (GalNAc...) threonine" evidence="4">
    <location>
        <position position="270"/>
    </location>
</feature>
<feature type="glycosylation site" description="O-linked (GalNAc...) serine" evidence="4">
    <location>
        <position position="272"/>
    </location>
</feature>
<gene>
    <name type="primary">ODAM</name>
    <name type="synonym">APIN</name>
</gene>
<accession>Q003G9</accession>
<dbReference type="EMBL" id="DQ980195">
    <property type="protein sequence ID" value="ABI98813.1"/>
    <property type="molecule type" value="mRNA"/>
</dbReference>
<dbReference type="RefSeq" id="NP_001072154.1">
    <property type="nucleotide sequence ID" value="NM_001078686.1"/>
</dbReference>
<dbReference type="FunCoup" id="Q003G9">
    <property type="interactions" value="36"/>
</dbReference>
<dbReference type="STRING" id="9823.ENSSSCP00000009881"/>
<dbReference type="GlyCosmos" id="Q003G9">
    <property type="glycosylation" value="13 sites, No reported glycans"/>
</dbReference>
<dbReference type="GlyGen" id="Q003G9">
    <property type="glycosylation" value="13 sites"/>
</dbReference>
<dbReference type="PaxDb" id="9823-ENSSSCP00000009881"/>
<dbReference type="GeneID" id="780437"/>
<dbReference type="KEGG" id="ssc:780437"/>
<dbReference type="CTD" id="54959"/>
<dbReference type="eggNOG" id="ENOG502RM1P">
    <property type="taxonomic scope" value="Eukaryota"/>
</dbReference>
<dbReference type="InParanoid" id="Q003G9"/>
<dbReference type="OrthoDB" id="9889202at2759"/>
<dbReference type="Proteomes" id="UP000008227">
    <property type="component" value="Unplaced"/>
</dbReference>
<dbReference type="Proteomes" id="UP000314985">
    <property type="component" value="Unplaced"/>
</dbReference>
<dbReference type="Proteomes" id="UP000694570">
    <property type="component" value="Unplaced"/>
</dbReference>
<dbReference type="Proteomes" id="UP000694571">
    <property type="component" value="Unplaced"/>
</dbReference>
<dbReference type="Proteomes" id="UP000694720">
    <property type="component" value="Unplaced"/>
</dbReference>
<dbReference type="Proteomes" id="UP000694722">
    <property type="component" value="Unplaced"/>
</dbReference>
<dbReference type="Proteomes" id="UP000694723">
    <property type="component" value="Unplaced"/>
</dbReference>
<dbReference type="Proteomes" id="UP000694724">
    <property type="component" value="Unplaced"/>
</dbReference>
<dbReference type="Proteomes" id="UP000694725">
    <property type="component" value="Unplaced"/>
</dbReference>
<dbReference type="Proteomes" id="UP000694726">
    <property type="component" value="Unplaced"/>
</dbReference>
<dbReference type="Proteomes" id="UP000694727">
    <property type="component" value="Unplaced"/>
</dbReference>
<dbReference type="Proteomes" id="UP000694728">
    <property type="component" value="Unplaced"/>
</dbReference>
<dbReference type="GO" id="GO:0005737">
    <property type="term" value="C:cytoplasm"/>
    <property type="evidence" value="ECO:0000318"/>
    <property type="project" value="GO_Central"/>
</dbReference>
<dbReference type="GO" id="GO:0005576">
    <property type="term" value="C:extracellular region"/>
    <property type="evidence" value="ECO:0007669"/>
    <property type="project" value="UniProtKB-SubCell"/>
</dbReference>
<dbReference type="GO" id="GO:0005634">
    <property type="term" value="C:nucleus"/>
    <property type="evidence" value="ECO:0000318"/>
    <property type="project" value="GO_Central"/>
</dbReference>
<dbReference type="GO" id="GO:0031214">
    <property type="term" value="P:biomineral tissue development"/>
    <property type="evidence" value="ECO:0007669"/>
    <property type="project" value="UniProtKB-KW"/>
</dbReference>
<dbReference type="GO" id="GO:0042475">
    <property type="term" value="P:odontogenesis of dentin-containing tooth"/>
    <property type="evidence" value="ECO:0000318"/>
    <property type="project" value="GO_Central"/>
</dbReference>
<dbReference type="InterPro" id="IPR026802">
    <property type="entry name" value="Odam"/>
</dbReference>
<dbReference type="PANTHER" id="PTHR16237">
    <property type="entry name" value="ODONTOGENIC AMELOBLAST-ASSOCIATED PROTEIN"/>
    <property type="match status" value="1"/>
</dbReference>
<dbReference type="PANTHER" id="PTHR16237:SF3">
    <property type="entry name" value="ODONTOGENIC AMELOBLAST-ASSOCIATED PROTEIN"/>
    <property type="match status" value="1"/>
</dbReference>
<dbReference type="Pfam" id="PF15424">
    <property type="entry name" value="ODAM"/>
    <property type="match status" value="1"/>
</dbReference>
<proteinExistence type="evidence at transcript level"/>
<comment type="function">
    <text evidence="2">Tooth-associated epithelia protein that probably plays a role in odontogenesis, the complex process that results in the initiation and generation of the tooth. May be incorporated in the enamel matrix at the end of mineralization process. Involved in the induction of RHOA activity via interaction with ARHGEF and expression of downstream factors such as ROCK. Plays a role in attachment of the junctional epithelium to the tooth surface.</text>
</comment>
<comment type="subunit">
    <text evidence="2">Interacts (via C-terminus) with ARHGEF5.</text>
</comment>
<comment type="subcellular location">
    <subcellularLocation>
        <location evidence="3">Secreted</location>
    </subcellularLocation>
    <subcellularLocation>
        <location evidence="2">Cytoplasm</location>
    </subcellularLocation>
    <subcellularLocation>
        <location evidence="2">Nucleus</location>
    </subcellularLocation>
</comment>
<comment type="PTM">
    <text evidence="1">O-glycosylated.</text>
</comment>
<comment type="similarity">
    <text evidence="5">Belongs to the ODAM family.</text>
</comment>
<organism>
    <name type="scientific">Sus scrofa</name>
    <name type="common">Pig</name>
    <dbReference type="NCBI Taxonomy" id="9823"/>
    <lineage>
        <taxon>Eukaryota</taxon>
        <taxon>Metazoa</taxon>
        <taxon>Chordata</taxon>
        <taxon>Craniata</taxon>
        <taxon>Vertebrata</taxon>
        <taxon>Euteleostomi</taxon>
        <taxon>Mammalia</taxon>
        <taxon>Eutheria</taxon>
        <taxon>Laurasiatheria</taxon>
        <taxon>Artiodactyla</taxon>
        <taxon>Suina</taxon>
        <taxon>Suidae</taxon>
        <taxon>Sus</taxon>
    </lineage>
</organism>
<evidence type="ECO:0000250" key="1"/>
<evidence type="ECO:0000250" key="2">
    <source>
        <dbReference type="UniProtKB" id="A1E959"/>
    </source>
</evidence>
<evidence type="ECO:0000250" key="3">
    <source>
        <dbReference type="UniProtKB" id="Q3HS83"/>
    </source>
</evidence>
<evidence type="ECO:0000255" key="4"/>
<evidence type="ECO:0000305" key="5"/>
<keyword id="KW-0091">Biomineralization</keyword>
<keyword id="KW-0963">Cytoplasm</keyword>
<keyword id="KW-0325">Glycoprotein</keyword>
<keyword id="KW-0539">Nucleus</keyword>
<keyword id="KW-1185">Reference proteome</keyword>
<keyword id="KW-0964">Secreted</keyword>
<keyword id="KW-0732">Signal</keyword>
<reference key="1">
    <citation type="journal article" date="2008" name="J. Cell. Biochem.">
        <title>Characterization of Apin, a secreted protein highly expressed in tooth-associated epithelia.</title>
        <authorList>
            <person name="Moffatt P."/>
            <person name="Smith C.E."/>
            <person name="St Arnaud R."/>
            <person name="Nanci A."/>
        </authorList>
    </citation>
    <scope>NUCLEOTIDE SEQUENCE [MRNA]</scope>
</reference>
<name>ODAM_PIG</name>
<protein>
    <recommendedName>
        <fullName>Odontogenic ameloblast-associated protein</fullName>
    </recommendedName>
    <alternativeName>
        <fullName>Apin</fullName>
    </alternativeName>
</protein>
<sequence length="276" mass="30700">MRTLILLGILGATMSAPLIPQRLMSASNSNELLLNLNNAQLQPLQLQGPWIPPFPVILQQRQQQAQIPGLSQFSLANLDWFAGLVPNQRAFPGQVSFAQVTEARQLDPSQPQTSPQTQQGPNYVMPSLLSFKMPPEQGQMLQYYPVYMLLPWEQAQQTAAQSPPQTGQQLFEEQMPFYTELGYVPQQVEPVMPGGQQQPVFDPFLGTAPETAVMTAEVLPYFQKEMIQFKHSNGGIFIPSTSQKPSTTNVFTSTVDPTITPKVMEKKAKTDSLKEP</sequence>